<feature type="chain" id="PRO_0000316543" description="Putative coatomer subunit alpha">
    <location>
        <begin position="1"/>
        <end position="1207"/>
    </location>
</feature>
<feature type="repeat" description="WD 1">
    <location>
        <begin position="9"/>
        <end position="50"/>
    </location>
</feature>
<feature type="repeat" description="WD 2">
    <location>
        <begin position="51"/>
        <end position="90"/>
    </location>
</feature>
<feature type="repeat" description="WD 3">
    <location>
        <begin position="93"/>
        <end position="134"/>
    </location>
</feature>
<feature type="repeat" description="WD 4">
    <location>
        <begin position="135"/>
        <end position="174"/>
    </location>
</feature>
<feature type="repeat" description="WD 5">
    <location>
        <begin position="210"/>
        <end position="249"/>
    </location>
</feature>
<feature type="repeat" description="WD 6">
    <location>
        <begin position="254"/>
        <end position="293"/>
    </location>
</feature>
<feature type="repeat" description="WD 7">
    <location>
        <begin position="296"/>
        <end position="336"/>
    </location>
</feature>
<feature type="repeat" description="WD 8">
    <location>
        <begin position="370"/>
        <end position="411"/>
    </location>
</feature>
<feature type="modified residue" description="Phosphoserine" evidence="2">
    <location>
        <position position="409"/>
    </location>
</feature>
<feature type="modified residue" description="Phosphoserine" evidence="2">
    <location>
        <position position="942"/>
    </location>
</feature>
<feature type="strand" evidence="3">
    <location>
        <begin position="2"/>
        <end position="10"/>
    </location>
</feature>
<feature type="strand" evidence="3">
    <location>
        <begin position="14"/>
        <end position="19"/>
    </location>
</feature>
<feature type="strand" evidence="3">
    <location>
        <begin position="21"/>
        <end position="30"/>
    </location>
</feature>
<feature type="strand" evidence="3">
    <location>
        <begin position="35"/>
        <end position="39"/>
    </location>
</feature>
<feature type="turn" evidence="3">
    <location>
        <begin position="40"/>
        <end position="43"/>
    </location>
</feature>
<feature type="strand" evidence="3">
    <location>
        <begin position="44"/>
        <end position="49"/>
    </location>
</feature>
<feature type="strand" evidence="3">
    <location>
        <begin position="56"/>
        <end position="61"/>
    </location>
</feature>
<feature type="strand" evidence="3">
    <location>
        <begin position="63"/>
        <end position="72"/>
    </location>
</feature>
<feature type="strand" evidence="3">
    <location>
        <begin position="77"/>
        <end position="81"/>
    </location>
</feature>
<feature type="turn" evidence="3">
    <location>
        <begin position="82"/>
        <end position="85"/>
    </location>
</feature>
<feature type="strand" evidence="3">
    <location>
        <begin position="86"/>
        <end position="91"/>
    </location>
</feature>
<feature type="strand" evidence="3">
    <location>
        <begin position="98"/>
        <end position="103"/>
    </location>
</feature>
<feature type="strand" evidence="3">
    <location>
        <begin position="105"/>
        <end position="114"/>
    </location>
</feature>
<feature type="strand" evidence="3">
    <location>
        <begin position="119"/>
        <end position="123"/>
    </location>
</feature>
<feature type="turn" evidence="3">
    <location>
        <begin position="124"/>
        <end position="127"/>
    </location>
</feature>
<feature type="strand" evidence="3">
    <location>
        <begin position="128"/>
        <end position="133"/>
    </location>
</feature>
<feature type="strand" evidence="3">
    <location>
        <begin position="140"/>
        <end position="145"/>
    </location>
</feature>
<feature type="strand" evidence="3">
    <location>
        <begin position="147"/>
        <end position="156"/>
    </location>
</feature>
<feature type="strand" evidence="3">
    <location>
        <begin position="161"/>
        <end position="165"/>
    </location>
</feature>
<feature type="helix" evidence="3">
    <location>
        <begin position="167"/>
        <end position="171"/>
    </location>
</feature>
<feature type="turn" evidence="3">
    <location>
        <begin position="172"/>
        <end position="174"/>
    </location>
</feature>
<feature type="helix" evidence="3">
    <location>
        <begin position="181"/>
        <end position="183"/>
    </location>
</feature>
<feature type="strand" evidence="3">
    <location>
        <begin position="202"/>
        <end position="208"/>
    </location>
</feature>
<feature type="strand" evidence="3">
    <location>
        <begin position="215"/>
        <end position="220"/>
    </location>
</feature>
<feature type="strand" evidence="3">
    <location>
        <begin position="222"/>
        <end position="231"/>
    </location>
</feature>
<feature type="strand" evidence="3">
    <location>
        <begin position="236"/>
        <end position="241"/>
    </location>
</feature>
<feature type="strand" evidence="3">
    <location>
        <begin position="246"/>
        <end position="252"/>
    </location>
</feature>
<feature type="strand" evidence="3">
    <location>
        <begin position="259"/>
        <end position="264"/>
    </location>
</feature>
<feature type="strand" evidence="3">
    <location>
        <begin position="266"/>
        <end position="275"/>
    </location>
</feature>
<feature type="strand" evidence="3">
    <location>
        <begin position="278"/>
        <end position="284"/>
    </location>
</feature>
<feature type="turn" evidence="3">
    <location>
        <begin position="285"/>
        <end position="287"/>
    </location>
</feature>
<feature type="strand" evidence="3">
    <location>
        <begin position="290"/>
        <end position="295"/>
    </location>
</feature>
<feature type="strand" evidence="3">
    <location>
        <begin position="301"/>
        <end position="306"/>
    </location>
</feature>
<feature type="strand" evidence="3">
    <location>
        <begin position="308"/>
        <end position="311"/>
    </location>
</feature>
<feature type="strand" evidence="3">
    <location>
        <begin position="313"/>
        <end position="317"/>
    </location>
</feature>
<feature type="strand" evidence="3">
    <location>
        <begin position="320"/>
        <end position="327"/>
    </location>
</feature>
<keyword id="KW-0002">3D-structure</keyword>
<keyword id="KW-0963">Cytoplasm</keyword>
<keyword id="KW-0931">ER-Golgi transport</keyword>
<keyword id="KW-0333">Golgi apparatus</keyword>
<keyword id="KW-0472">Membrane</keyword>
<keyword id="KW-0597">Phosphoprotein</keyword>
<keyword id="KW-0653">Protein transport</keyword>
<keyword id="KW-1185">Reference proteome</keyword>
<keyword id="KW-0677">Repeat</keyword>
<keyword id="KW-0813">Transport</keyword>
<keyword id="KW-0853">WD repeat</keyword>
<comment type="function">
    <text evidence="1">The coatomer is a cytosolic protein complex that binds to dilysine motifs and reversibly associates with Golgi non-clathrin-coated vesicles, which further mediate biosynthetic protein transport from the ER, via the Golgi up to the trans Golgi network. Coatomer complex is required for budding from Golgi membranes, and is essential for the retrograde Golgi-to-ER transport of dilysine-tagged proteins (By similarity).</text>
</comment>
<comment type="subunit">
    <text evidence="1">Oligomeric complex that consists of at least the alpha, beta, beta', gamma, delta, epsilon and zeta subunits.</text>
</comment>
<comment type="interaction">
    <interactant intactId="EBI-8503699">
        <id>Q96WV5</id>
    </interactant>
    <interactant intactId="EBI-4407041">
        <id>P68978</id>
    </interactant>
    <organismsDiffer>true</organismsDiffer>
    <experiments>2</experiments>
</comment>
<comment type="subcellular location">
    <subcellularLocation>
        <location>Cytoplasm</location>
    </subcellularLocation>
    <subcellularLocation>
        <location>Golgi apparatus membrane</location>
        <topology>Peripheral membrane protein</topology>
        <orientation>Cytoplasmic side</orientation>
    </subcellularLocation>
</comment>
<sequence length="1207" mass="136369">MEMLTKFESRSSRAKGVAFHPTQPWILTSLHNGRIQLWDYRMGTLLDRFDGHDGPVRGIAFHPTQPLFVSGGDDYKVNVWNYKSRKLLFSLCGHMDYVRVCTFHHEYPWILSCSDDQTIRIWNWQSRNCIAILTGHSHYVMCAAFHPSEDLIVSASLDQTVRVWDISGLRMKNAAPVSMSLEDQLAQAHNSISNDLFGSTDAIVKFVLEGHDRGVNWCAFHPTLPLILSAGDDRLVKLWRMTASKAWEVDTCRGHFNNVSCCLFHPHQELILSASEDKTIRVWDLNRRTAVQTFRRDNDRFWFITVHPKLNLFAAAHDSGVMVFKLERERPAHALNINTLLYVNKEKSIVSYDLLRAQSTTVASVKHLGSAWLPPRSLSYNPAEKVALLTSSADNGVYELVNVSSRSNSLPLKDNIKGPGDDAIFVARNRFAVFSRSDQTIEIKDLSNKVTKTIQLPEKTRDIFFAGMGHVLLSTATQVHLFDLQQKKIVSSFNANRVKYVVWSNDNSQAALLGKHYVYIVKKNLELITSIHETIRIKSAVWVENNVLLYATLDHLKYALMSGDTGVIKTLESTLYLVKAKGNMVFALNRAAEPVSFEIDPTEYLFKLALLRKDYEQVLHLIQNSNLVGQAIIAYLQKKGYPEIALQFVEDPSTRFELALECGNLETALELARTIDRPEVWSRLASDAMSYGNHKIAEITFQKLRYFEKLSFLYLITGNAEKLQKMAIIAEKRNDTLSLFQNSLYLNEVESRINILEQAGMYPIAYLTAKSNGLEEKAQQILSHCNKTEEEIKLPSLGSAFTTPVPVNETYTHNWPLLDTSHSTFEKSLQERMEQLAIERQEEQESEEEYEEVEQSLMDVVDEMSDLAESVPEEEVDGWEVEDLAPEEAVNDVVDDASAFVGADEIFLWKRNSPLAADHIAAGDFESAMKILNKQVGAINFSPLKTRFLEIYTASRVYLPTISGLDPLVSYVRRNAETAERSQALPFITRNLASIKSHELHEAYRLVKANKILEAQICFRSIIYLALTTVANSEEEADEISALIDECCRYIVALSCELERRRLGEEDTKRALELSYYFASADLQPMHSIIALRLAINASHKLKNYKSASFLGNKLLQLAESGPAAEAANRAITLGDRNPHDAFEIEYDPHVEMRICPKTLTPVYSGDDFDVCSVCGAVYHKGYVNEVCTVCDVGGIGQKGTGRRFFA</sequence>
<gene>
    <name type="ORF">SPBPJ4664.04</name>
</gene>
<organism>
    <name type="scientific">Schizosaccharomyces pombe (strain 972 / ATCC 24843)</name>
    <name type="common">Fission yeast</name>
    <dbReference type="NCBI Taxonomy" id="284812"/>
    <lineage>
        <taxon>Eukaryota</taxon>
        <taxon>Fungi</taxon>
        <taxon>Dikarya</taxon>
        <taxon>Ascomycota</taxon>
        <taxon>Taphrinomycotina</taxon>
        <taxon>Schizosaccharomycetes</taxon>
        <taxon>Schizosaccharomycetales</taxon>
        <taxon>Schizosaccharomycetaceae</taxon>
        <taxon>Schizosaccharomyces</taxon>
    </lineage>
</organism>
<accession>Q96WV5</accession>
<reference key="1">
    <citation type="journal article" date="2002" name="Nature">
        <title>The genome sequence of Schizosaccharomyces pombe.</title>
        <authorList>
            <person name="Wood V."/>
            <person name="Gwilliam R."/>
            <person name="Rajandream M.A."/>
            <person name="Lyne M.H."/>
            <person name="Lyne R."/>
            <person name="Stewart A."/>
            <person name="Sgouros J.G."/>
            <person name="Peat N."/>
            <person name="Hayles J."/>
            <person name="Baker S.G."/>
            <person name="Basham D."/>
            <person name="Bowman S."/>
            <person name="Brooks K."/>
            <person name="Brown D."/>
            <person name="Brown S."/>
            <person name="Chillingworth T."/>
            <person name="Churcher C.M."/>
            <person name="Collins M."/>
            <person name="Connor R."/>
            <person name="Cronin A."/>
            <person name="Davis P."/>
            <person name="Feltwell T."/>
            <person name="Fraser A."/>
            <person name="Gentles S."/>
            <person name="Goble A."/>
            <person name="Hamlin N."/>
            <person name="Harris D.E."/>
            <person name="Hidalgo J."/>
            <person name="Hodgson G."/>
            <person name="Holroyd S."/>
            <person name="Hornsby T."/>
            <person name="Howarth S."/>
            <person name="Huckle E.J."/>
            <person name="Hunt S."/>
            <person name="Jagels K."/>
            <person name="James K.D."/>
            <person name="Jones L."/>
            <person name="Jones M."/>
            <person name="Leather S."/>
            <person name="McDonald S."/>
            <person name="McLean J."/>
            <person name="Mooney P."/>
            <person name="Moule S."/>
            <person name="Mungall K.L."/>
            <person name="Murphy L.D."/>
            <person name="Niblett D."/>
            <person name="Odell C."/>
            <person name="Oliver K."/>
            <person name="O'Neil S."/>
            <person name="Pearson D."/>
            <person name="Quail M.A."/>
            <person name="Rabbinowitsch E."/>
            <person name="Rutherford K.M."/>
            <person name="Rutter S."/>
            <person name="Saunders D."/>
            <person name="Seeger K."/>
            <person name="Sharp S."/>
            <person name="Skelton J."/>
            <person name="Simmonds M.N."/>
            <person name="Squares R."/>
            <person name="Squares S."/>
            <person name="Stevens K."/>
            <person name="Taylor K."/>
            <person name="Taylor R.G."/>
            <person name="Tivey A."/>
            <person name="Walsh S.V."/>
            <person name="Warren T."/>
            <person name="Whitehead S."/>
            <person name="Woodward J.R."/>
            <person name="Volckaert G."/>
            <person name="Aert R."/>
            <person name="Robben J."/>
            <person name="Grymonprez B."/>
            <person name="Weltjens I."/>
            <person name="Vanstreels E."/>
            <person name="Rieger M."/>
            <person name="Schaefer M."/>
            <person name="Mueller-Auer S."/>
            <person name="Gabel C."/>
            <person name="Fuchs M."/>
            <person name="Duesterhoeft A."/>
            <person name="Fritzc C."/>
            <person name="Holzer E."/>
            <person name="Moestl D."/>
            <person name="Hilbert H."/>
            <person name="Borzym K."/>
            <person name="Langer I."/>
            <person name="Beck A."/>
            <person name="Lehrach H."/>
            <person name="Reinhardt R."/>
            <person name="Pohl T.M."/>
            <person name="Eger P."/>
            <person name="Zimmermann W."/>
            <person name="Wedler H."/>
            <person name="Wambutt R."/>
            <person name="Purnelle B."/>
            <person name="Goffeau A."/>
            <person name="Cadieu E."/>
            <person name="Dreano S."/>
            <person name="Gloux S."/>
            <person name="Lelaure V."/>
            <person name="Mottier S."/>
            <person name="Galibert F."/>
            <person name="Aves S.J."/>
            <person name="Xiang Z."/>
            <person name="Hunt C."/>
            <person name="Moore K."/>
            <person name="Hurst S.M."/>
            <person name="Lucas M."/>
            <person name="Rochet M."/>
            <person name="Gaillardin C."/>
            <person name="Tallada V.A."/>
            <person name="Garzon A."/>
            <person name="Thode G."/>
            <person name="Daga R.R."/>
            <person name="Cruzado L."/>
            <person name="Jimenez J."/>
            <person name="Sanchez M."/>
            <person name="del Rey F."/>
            <person name="Benito J."/>
            <person name="Dominguez A."/>
            <person name="Revuelta J.L."/>
            <person name="Moreno S."/>
            <person name="Armstrong J."/>
            <person name="Forsburg S.L."/>
            <person name="Cerutti L."/>
            <person name="Lowe T."/>
            <person name="McCombie W.R."/>
            <person name="Paulsen I."/>
            <person name="Potashkin J."/>
            <person name="Shpakovski G.V."/>
            <person name="Ussery D."/>
            <person name="Barrell B.G."/>
            <person name="Nurse P."/>
        </authorList>
    </citation>
    <scope>NUCLEOTIDE SEQUENCE [LARGE SCALE GENOMIC DNA]</scope>
    <source>
        <strain>972 / ATCC 24843</strain>
    </source>
</reference>
<reference key="2">
    <citation type="journal article" date="2008" name="J. Proteome Res.">
        <title>Phosphoproteome analysis of fission yeast.</title>
        <authorList>
            <person name="Wilson-Grady J.T."/>
            <person name="Villen J."/>
            <person name="Gygi S.P."/>
        </authorList>
    </citation>
    <scope>PHOSPHORYLATION [LARGE SCALE ANALYSIS] AT SER-409 AND SER-942</scope>
    <scope>IDENTIFICATION BY MASS SPECTROMETRY</scope>
</reference>
<proteinExistence type="evidence at protein level"/>
<name>COPA_SCHPO</name>
<evidence type="ECO:0000250" key="1"/>
<evidence type="ECO:0000269" key="2">
    <source>
    </source>
</evidence>
<evidence type="ECO:0007829" key="3">
    <source>
        <dbReference type="PDB" id="7S16"/>
    </source>
</evidence>
<dbReference type="EMBL" id="CU329671">
    <property type="protein sequence ID" value="CAC38349.1"/>
    <property type="molecule type" value="Genomic_DNA"/>
</dbReference>
<dbReference type="PDB" id="4J87">
    <property type="method" value="X-ray"/>
    <property type="resolution" value="1.67 A"/>
    <property type="chains" value="A=1-327"/>
</dbReference>
<dbReference type="PDB" id="4J8B">
    <property type="method" value="X-ray"/>
    <property type="resolution" value="1.88 A"/>
    <property type="chains" value="A=1-327"/>
</dbReference>
<dbReference type="PDB" id="4J8G">
    <property type="method" value="X-ray"/>
    <property type="resolution" value="1.90 A"/>
    <property type="chains" value="A/B=1-327"/>
</dbReference>
<dbReference type="PDB" id="7S16">
    <property type="method" value="X-ray"/>
    <property type="resolution" value="1.24 A"/>
    <property type="chains" value="A=1-327"/>
</dbReference>
<dbReference type="PDB" id="7S22">
    <property type="method" value="X-ray"/>
    <property type="resolution" value="1.75 A"/>
    <property type="chains" value="A/B/C=1-327"/>
</dbReference>
<dbReference type="PDB" id="7S23">
    <property type="method" value="X-ray"/>
    <property type="resolution" value="1.49 A"/>
    <property type="chains" value="A/B/C=1-327"/>
</dbReference>
<dbReference type="PDB" id="8ENY">
    <property type="method" value="X-ray"/>
    <property type="resolution" value="1.90 A"/>
    <property type="chains" value="A/B/C=1-327"/>
</dbReference>
<dbReference type="PDB" id="8ENZ">
    <property type="method" value="X-ray"/>
    <property type="resolution" value="1.65 A"/>
    <property type="chains" value="A/B/C=1-327"/>
</dbReference>
<dbReference type="PDB" id="8EO0">
    <property type="method" value="X-ray"/>
    <property type="resolution" value="1.80 A"/>
    <property type="chains" value="A/B/C=1-327"/>
</dbReference>
<dbReference type="PDB" id="8EVL">
    <property type="method" value="X-ray"/>
    <property type="resolution" value="1.90 A"/>
    <property type="chains" value="A/B/C=1-327"/>
</dbReference>
<dbReference type="PDBsum" id="4J87"/>
<dbReference type="PDBsum" id="4J8B"/>
<dbReference type="PDBsum" id="4J8G"/>
<dbReference type="PDBsum" id="7S16"/>
<dbReference type="PDBsum" id="7S22"/>
<dbReference type="PDBsum" id="7S23"/>
<dbReference type="PDBsum" id="8ENY"/>
<dbReference type="PDBsum" id="8ENZ"/>
<dbReference type="PDBsum" id="8EO0"/>
<dbReference type="PDBsum" id="8EVL"/>
<dbReference type="SMR" id="Q96WV5"/>
<dbReference type="BioGRID" id="277920">
    <property type="interactions" value="13"/>
</dbReference>
<dbReference type="FunCoup" id="Q96WV5">
    <property type="interactions" value="601"/>
</dbReference>
<dbReference type="IntAct" id="Q96WV5">
    <property type="interactions" value="7"/>
</dbReference>
<dbReference type="MINT" id="Q96WV5"/>
<dbReference type="STRING" id="284812.Q96WV5"/>
<dbReference type="iPTMnet" id="Q96WV5"/>
<dbReference type="PaxDb" id="4896-SPBPJ4664.04.1"/>
<dbReference type="EnsemblFungi" id="SPBPJ4664.04.1">
    <property type="protein sequence ID" value="SPBPJ4664.04.1:pep"/>
    <property type="gene ID" value="SPBPJ4664.04"/>
</dbReference>
<dbReference type="KEGG" id="spo:2541412"/>
<dbReference type="PomBase" id="SPBPJ4664.04"/>
<dbReference type="VEuPathDB" id="FungiDB:SPBPJ4664.04"/>
<dbReference type="eggNOG" id="KOG0292">
    <property type="taxonomic scope" value="Eukaryota"/>
</dbReference>
<dbReference type="HOGENOM" id="CLU_007565_1_0_1"/>
<dbReference type="InParanoid" id="Q96WV5"/>
<dbReference type="OMA" id="EMTYQKQ"/>
<dbReference type="PhylomeDB" id="Q96WV5"/>
<dbReference type="Reactome" id="R-SPO-6807878">
    <property type="pathway name" value="COPI-mediated anterograde transport"/>
</dbReference>
<dbReference type="Reactome" id="R-SPO-6811434">
    <property type="pathway name" value="COPI-dependent Golgi-to-ER retrograde traffic"/>
</dbReference>
<dbReference type="EvolutionaryTrace" id="Q96WV5"/>
<dbReference type="PRO" id="PR:Q96WV5"/>
<dbReference type="Proteomes" id="UP000002485">
    <property type="component" value="Chromosome II"/>
</dbReference>
<dbReference type="GO" id="GO:0030126">
    <property type="term" value="C:COPI vesicle coat"/>
    <property type="evidence" value="ECO:0000318"/>
    <property type="project" value="GO_Central"/>
</dbReference>
<dbReference type="GO" id="GO:0005737">
    <property type="term" value="C:cytoplasm"/>
    <property type="evidence" value="ECO:0007005"/>
    <property type="project" value="PomBase"/>
</dbReference>
<dbReference type="GO" id="GO:0005794">
    <property type="term" value="C:Golgi apparatus"/>
    <property type="evidence" value="ECO:0007005"/>
    <property type="project" value="PomBase"/>
</dbReference>
<dbReference type="GO" id="GO:0000139">
    <property type="term" value="C:Golgi membrane"/>
    <property type="evidence" value="ECO:0007669"/>
    <property type="project" value="UniProtKB-SubCell"/>
</dbReference>
<dbReference type="GO" id="GO:0038024">
    <property type="term" value="F:cargo receptor activity"/>
    <property type="evidence" value="ECO:0000269"/>
    <property type="project" value="PomBase"/>
</dbReference>
<dbReference type="GO" id="GO:0005198">
    <property type="term" value="F:structural molecule activity"/>
    <property type="evidence" value="ECO:0007669"/>
    <property type="project" value="InterPro"/>
</dbReference>
<dbReference type="GO" id="GO:0006888">
    <property type="term" value="P:endoplasmic reticulum to Golgi vesicle-mediated transport"/>
    <property type="evidence" value="ECO:0000318"/>
    <property type="project" value="GO_Central"/>
</dbReference>
<dbReference type="GO" id="GO:0006891">
    <property type="term" value="P:intra-Golgi vesicle-mediated transport"/>
    <property type="evidence" value="ECO:0000318"/>
    <property type="project" value="GO_Central"/>
</dbReference>
<dbReference type="GO" id="GO:0006886">
    <property type="term" value="P:intracellular protein transport"/>
    <property type="evidence" value="ECO:0000318"/>
    <property type="project" value="GO_Central"/>
</dbReference>
<dbReference type="GO" id="GO:0006890">
    <property type="term" value="P:retrograde vesicle-mediated transport, Golgi to endoplasmic reticulum"/>
    <property type="evidence" value="ECO:0000318"/>
    <property type="project" value="GO_Central"/>
</dbReference>
<dbReference type="CDD" id="cd22948">
    <property type="entry name" value="Coatomer_WDAD_alpha"/>
    <property type="match status" value="1"/>
</dbReference>
<dbReference type="CDD" id="cd00200">
    <property type="entry name" value="WD40"/>
    <property type="match status" value="1"/>
</dbReference>
<dbReference type="FunFam" id="1.25.40.470:FF:000002">
    <property type="entry name" value="Coatomer subunit alpha"/>
    <property type="match status" value="1"/>
</dbReference>
<dbReference type="FunFam" id="2.130.10.10:FF:000010">
    <property type="entry name" value="Coatomer subunit alpha"/>
    <property type="match status" value="1"/>
</dbReference>
<dbReference type="Gene3D" id="1.25.40.470">
    <property type="match status" value="1"/>
</dbReference>
<dbReference type="Gene3D" id="2.130.10.10">
    <property type="entry name" value="YVTN repeat-like/Quinoprotein amine dehydrogenase"/>
    <property type="match status" value="1"/>
</dbReference>
<dbReference type="InterPro" id="IPR006692">
    <property type="entry name" value="Beta-prop_COPA/B_2nd"/>
</dbReference>
<dbReference type="InterPro" id="IPR047312">
    <property type="entry name" value="Coatomer_alpha_WD-assoc_reg"/>
</dbReference>
<dbReference type="InterPro" id="IPR016391">
    <property type="entry name" value="Coatomer_asu"/>
</dbReference>
<dbReference type="InterPro" id="IPR010714">
    <property type="entry name" value="Coatomer_asu_C"/>
</dbReference>
<dbReference type="InterPro" id="IPR050844">
    <property type="entry name" value="Coatomer_complex_subunit"/>
</dbReference>
<dbReference type="InterPro" id="IPR020472">
    <property type="entry name" value="G-protein_beta_WD-40_rep"/>
</dbReference>
<dbReference type="InterPro" id="IPR056176">
    <property type="entry name" value="TPR_COPA_B"/>
</dbReference>
<dbReference type="InterPro" id="IPR015943">
    <property type="entry name" value="WD40/YVTN_repeat-like_dom_sf"/>
</dbReference>
<dbReference type="InterPro" id="IPR019775">
    <property type="entry name" value="WD40_repeat_CS"/>
</dbReference>
<dbReference type="InterPro" id="IPR036322">
    <property type="entry name" value="WD40_repeat_dom_sf"/>
</dbReference>
<dbReference type="InterPro" id="IPR001680">
    <property type="entry name" value="WD40_rpt"/>
</dbReference>
<dbReference type="PANTHER" id="PTHR19876">
    <property type="entry name" value="COATOMER"/>
    <property type="match status" value="1"/>
</dbReference>
<dbReference type="PANTHER" id="PTHR19876:SF1">
    <property type="entry name" value="COATOMER SUBUNIT ALPHA"/>
    <property type="match status" value="1"/>
</dbReference>
<dbReference type="Pfam" id="PF04053">
    <property type="entry name" value="B-prop_COPA_B_2nd"/>
    <property type="match status" value="1"/>
</dbReference>
<dbReference type="Pfam" id="PF06957">
    <property type="entry name" value="COPI_C"/>
    <property type="match status" value="1"/>
</dbReference>
<dbReference type="Pfam" id="PF23953">
    <property type="entry name" value="TPR_COPA_B"/>
    <property type="match status" value="1"/>
</dbReference>
<dbReference type="Pfam" id="PF00400">
    <property type="entry name" value="WD40"/>
    <property type="match status" value="6"/>
</dbReference>
<dbReference type="PIRSF" id="PIRSF003354">
    <property type="entry name" value="Coatomer_alpha_subunit"/>
    <property type="match status" value="1"/>
</dbReference>
<dbReference type="PRINTS" id="PR00320">
    <property type="entry name" value="GPROTEINBRPT"/>
</dbReference>
<dbReference type="SMART" id="SM00320">
    <property type="entry name" value="WD40"/>
    <property type="match status" value="7"/>
</dbReference>
<dbReference type="SUPFAM" id="SSF82171">
    <property type="entry name" value="DPP6 N-terminal domain-like"/>
    <property type="match status" value="1"/>
</dbReference>
<dbReference type="SUPFAM" id="SSF50978">
    <property type="entry name" value="WD40 repeat-like"/>
    <property type="match status" value="1"/>
</dbReference>
<dbReference type="PROSITE" id="PS00678">
    <property type="entry name" value="WD_REPEATS_1"/>
    <property type="match status" value="2"/>
</dbReference>
<dbReference type="PROSITE" id="PS50082">
    <property type="entry name" value="WD_REPEATS_2"/>
    <property type="match status" value="6"/>
</dbReference>
<dbReference type="PROSITE" id="PS50294">
    <property type="entry name" value="WD_REPEATS_REGION"/>
    <property type="match status" value="1"/>
</dbReference>
<protein>
    <recommendedName>
        <fullName>Putative coatomer subunit alpha</fullName>
    </recommendedName>
    <alternativeName>
        <fullName>Alpha-coat protein</fullName>
        <shortName>Alpha-COP</shortName>
    </alternativeName>
</protein>